<evidence type="ECO:0000255" key="1">
    <source>
        <dbReference type="HAMAP-Rule" id="MF_01017"/>
    </source>
</evidence>
<name>NQOR_GLUDA</name>
<accession>A9HFY5</accession>
<accession>B5ZE55</accession>
<sequence>MTKVLVLYYSTYGHIETMAEAVAEGVRAAGAQADIKRVPETVPEDVARTHHFKLDQAAPIATPADLEAYDAIIVGTPTRFGRMASQMASFWDQTGGLWMKGALIGKVGAAFTSTATQHGGQETTLFSVITNLLHQGMVISGLPYNFQGQMRLDEITGGAPYGATTIAAGDGSRAVSDNERDGARFLGQHVAQIAAKLSA</sequence>
<dbReference type="EC" id="1.6.5.2" evidence="1"/>
<dbReference type="EMBL" id="AM889285">
    <property type="protein sequence ID" value="CAP55427.1"/>
    <property type="molecule type" value="Genomic_DNA"/>
</dbReference>
<dbReference type="EMBL" id="CP001189">
    <property type="protein sequence ID" value="ACI51939.1"/>
    <property type="molecule type" value="Genomic_DNA"/>
</dbReference>
<dbReference type="RefSeq" id="WP_012224814.1">
    <property type="nucleotide sequence ID" value="NC_010125.1"/>
</dbReference>
<dbReference type="SMR" id="A9HFY5"/>
<dbReference type="STRING" id="272568.GDI1484"/>
<dbReference type="KEGG" id="gdi:GDI1484"/>
<dbReference type="KEGG" id="gdj:Gdia_2181"/>
<dbReference type="eggNOG" id="COG0655">
    <property type="taxonomic scope" value="Bacteria"/>
</dbReference>
<dbReference type="HOGENOM" id="CLU_051402_0_2_5"/>
<dbReference type="OrthoDB" id="9801479at2"/>
<dbReference type="Proteomes" id="UP000001176">
    <property type="component" value="Chromosome"/>
</dbReference>
<dbReference type="GO" id="GO:0016020">
    <property type="term" value="C:membrane"/>
    <property type="evidence" value="ECO:0007669"/>
    <property type="project" value="TreeGrafter"/>
</dbReference>
<dbReference type="GO" id="GO:0050660">
    <property type="term" value="F:flavin adenine dinucleotide binding"/>
    <property type="evidence" value="ECO:0007669"/>
    <property type="project" value="UniProtKB-UniRule"/>
</dbReference>
<dbReference type="GO" id="GO:0010181">
    <property type="term" value="F:FMN binding"/>
    <property type="evidence" value="ECO:0007669"/>
    <property type="project" value="InterPro"/>
</dbReference>
<dbReference type="GO" id="GO:0051287">
    <property type="term" value="F:NAD binding"/>
    <property type="evidence" value="ECO:0007669"/>
    <property type="project" value="UniProtKB-UniRule"/>
</dbReference>
<dbReference type="GO" id="GO:0050136">
    <property type="term" value="F:NADH:ubiquinone reductase (non-electrogenic) activity"/>
    <property type="evidence" value="ECO:0007669"/>
    <property type="project" value="RHEA"/>
</dbReference>
<dbReference type="GO" id="GO:0050661">
    <property type="term" value="F:NADP binding"/>
    <property type="evidence" value="ECO:0007669"/>
    <property type="project" value="UniProtKB-UniRule"/>
</dbReference>
<dbReference type="GO" id="GO:0008753">
    <property type="term" value="F:NADPH dehydrogenase (quinone) activity"/>
    <property type="evidence" value="ECO:0007669"/>
    <property type="project" value="RHEA"/>
</dbReference>
<dbReference type="FunFam" id="3.40.50.360:FF:000001">
    <property type="entry name" value="NAD(P)H dehydrogenase (Quinone) FQR1-like"/>
    <property type="match status" value="1"/>
</dbReference>
<dbReference type="Gene3D" id="3.40.50.360">
    <property type="match status" value="1"/>
</dbReference>
<dbReference type="HAMAP" id="MF_01017">
    <property type="entry name" value="NQOR"/>
    <property type="match status" value="1"/>
</dbReference>
<dbReference type="InterPro" id="IPR008254">
    <property type="entry name" value="Flavodoxin/NO_synth"/>
</dbReference>
<dbReference type="InterPro" id="IPR029039">
    <property type="entry name" value="Flavoprotein-like_sf"/>
</dbReference>
<dbReference type="InterPro" id="IPR010089">
    <property type="entry name" value="Flavoprotein_WrbA-like"/>
</dbReference>
<dbReference type="InterPro" id="IPR005025">
    <property type="entry name" value="FMN_Rdtase-like_dom"/>
</dbReference>
<dbReference type="InterPro" id="IPR037513">
    <property type="entry name" value="NQO"/>
</dbReference>
<dbReference type="NCBIfam" id="TIGR01755">
    <property type="entry name" value="flav_wrbA"/>
    <property type="match status" value="1"/>
</dbReference>
<dbReference type="NCBIfam" id="NF002999">
    <property type="entry name" value="PRK03767.1"/>
    <property type="match status" value="1"/>
</dbReference>
<dbReference type="PANTHER" id="PTHR30546">
    <property type="entry name" value="FLAVODOXIN-RELATED PROTEIN WRBA-RELATED"/>
    <property type="match status" value="1"/>
</dbReference>
<dbReference type="PANTHER" id="PTHR30546:SF23">
    <property type="entry name" value="FLAVOPROTEIN-LIKE PROTEIN YCP4-RELATED"/>
    <property type="match status" value="1"/>
</dbReference>
<dbReference type="Pfam" id="PF03358">
    <property type="entry name" value="FMN_red"/>
    <property type="match status" value="1"/>
</dbReference>
<dbReference type="SUPFAM" id="SSF52218">
    <property type="entry name" value="Flavoproteins"/>
    <property type="match status" value="1"/>
</dbReference>
<dbReference type="PROSITE" id="PS50902">
    <property type="entry name" value="FLAVODOXIN_LIKE"/>
    <property type="match status" value="1"/>
</dbReference>
<comment type="catalytic activity">
    <reaction evidence="1">
        <text>a quinone + NADH + H(+) = a quinol + NAD(+)</text>
        <dbReference type="Rhea" id="RHEA:46160"/>
        <dbReference type="ChEBI" id="CHEBI:15378"/>
        <dbReference type="ChEBI" id="CHEBI:24646"/>
        <dbReference type="ChEBI" id="CHEBI:57540"/>
        <dbReference type="ChEBI" id="CHEBI:57945"/>
        <dbReference type="ChEBI" id="CHEBI:132124"/>
        <dbReference type="EC" id="1.6.5.2"/>
    </reaction>
</comment>
<comment type="catalytic activity">
    <reaction evidence="1">
        <text>a quinone + NADPH + H(+) = a quinol + NADP(+)</text>
        <dbReference type="Rhea" id="RHEA:46164"/>
        <dbReference type="ChEBI" id="CHEBI:15378"/>
        <dbReference type="ChEBI" id="CHEBI:24646"/>
        <dbReference type="ChEBI" id="CHEBI:57783"/>
        <dbReference type="ChEBI" id="CHEBI:58349"/>
        <dbReference type="ChEBI" id="CHEBI:132124"/>
        <dbReference type="EC" id="1.6.5.2"/>
    </reaction>
</comment>
<comment type="cofactor">
    <cofactor evidence="1">
        <name>FMN</name>
        <dbReference type="ChEBI" id="CHEBI:58210"/>
    </cofactor>
    <text evidence="1">Binds 1 FMN per monomer.</text>
</comment>
<comment type="similarity">
    <text evidence="1">Belongs to the WrbA family.</text>
</comment>
<feature type="chain" id="PRO_1000084141" description="NAD(P)H dehydrogenase (quinone)">
    <location>
        <begin position="1"/>
        <end position="199"/>
    </location>
</feature>
<feature type="domain" description="Flavodoxin-like" evidence="1">
    <location>
        <begin position="4"/>
        <end position="190"/>
    </location>
</feature>
<feature type="binding site" evidence="1">
    <location>
        <begin position="10"/>
        <end position="15"/>
    </location>
    <ligand>
        <name>FMN</name>
        <dbReference type="ChEBI" id="CHEBI:58210"/>
    </ligand>
</feature>
<feature type="binding site" evidence="1">
    <location>
        <position position="12"/>
    </location>
    <ligand>
        <name>NAD(+)</name>
        <dbReference type="ChEBI" id="CHEBI:57540"/>
    </ligand>
</feature>
<feature type="binding site" evidence="1">
    <location>
        <begin position="78"/>
        <end position="80"/>
    </location>
    <ligand>
        <name>FMN</name>
        <dbReference type="ChEBI" id="CHEBI:58210"/>
    </ligand>
</feature>
<feature type="binding site" evidence="1">
    <location>
        <position position="98"/>
    </location>
    <ligand>
        <name>substrate</name>
    </ligand>
</feature>
<feature type="binding site" evidence="1">
    <location>
        <begin position="113"/>
        <end position="119"/>
    </location>
    <ligand>
        <name>FMN</name>
        <dbReference type="ChEBI" id="CHEBI:58210"/>
    </ligand>
</feature>
<feature type="binding site" evidence="1">
    <location>
        <position position="134"/>
    </location>
    <ligand>
        <name>FMN</name>
        <dbReference type="ChEBI" id="CHEBI:58210"/>
    </ligand>
</feature>
<protein>
    <recommendedName>
        <fullName evidence="1">NAD(P)H dehydrogenase (quinone)</fullName>
        <ecNumber evidence="1">1.6.5.2</ecNumber>
    </recommendedName>
    <alternativeName>
        <fullName>Flavoprotein WrbA</fullName>
    </alternativeName>
    <alternativeName>
        <fullName evidence="1">NAD(P)H:quinone oxidoreductase</fullName>
        <shortName evidence="1">NQO</shortName>
    </alternativeName>
</protein>
<gene>
    <name type="ordered locus">GDI1484</name>
    <name type="ordered locus">Gdia_2181</name>
</gene>
<reference key="1">
    <citation type="journal article" date="2009" name="BMC Genomics">
        <title>Complete genome sequence of the sugarcane nitrogen-fixing endophyte Gluconacetobacter diazotrophicus Pal5.</title>
        <authorList>
            <person name="Bertalan M."/>
            <person name="Albano R."/>
            <person name="de Padua V."/>
            <person name="Rouws L."/>
            <person name="Rojas C."/>
            <person name="Hemerly A."/>
            <person name="Teixeira K."/>
            <person name="Schwab S."/>
            <person name="Araujo J."/>
            <person name="Oliveira A."/>
            <person name="Franca L."/>
            <person name="Magalhaes V."/>
            <person name="Alqueres S."/>
            <person name="Cardoso A."/>
            <person name="Almeida W."/>
            <person name="Loureiro M.M."/>
            <person name="Nogueira E."/>
            <person name="Cidade D."/>
            <person name="Oliveira D."/>
            <person name="Simao T."/>
            <person name="Macedo J."/>
            <person name="Valadao A."/>
            <person name="Dreschsel M."/>
            <person name="Freitas F."/>
            <person name="Vidal M."/>
            <person name="Guedes H."/>
            <person name="Rodrigues E."/>
            <person name="Meneses C."/>
            <person name="Brioso P."/>
            <person name="Pozzer L."/>
            <person name="Figueiredo D."/>
            <person name="Montano H."/>
            <person name="Junior J."/>
            <person name="de Souza Filho G."/>
            <person name="Martin Quintana Flores V."/>
            <person name="Ferreira B."/>
            <person name="Branco A."/>
            <person name="Gonzalez P."/>
            <person name="Guillobel H."/>
            <person name="Lemos M."/>
            <person name="Seibel L."/>
            <person name="Macedo J."/>
            <person name="Alves-Ferreira M."/>
            <person name="Sachetto-Martins G."/>
            <person name="Coelho A."/>
            <person name="Santos E."/>
            <person name="Amaral G."/>
            <person name="Neves A."/>
            <person name="Pacheco A.B."/>
            <person name="Carvalho D."/>
            <person name="Lery L."/>
            <person name="Bisch P."/>
            <person name="Rossle S.C."/>
            <person name="Urmenyi T."/>
            <person name="Rael Pereira A."/>
            <person name="Silva R."/>
            <person name="Rondinelli E."/>
            <person name="von Kruger W."/>
            <person name="Martins O."/>
            <person name="Baldani J.I."/>
            <person name="Ferreira P.C."/>
        </authorList>
    </citation>
    <scope>NUCLEOTIDE SEQUENCE [LARGE SCALE GENOMIC DNA]</scope>
    <source>
        <strain>ATCC 49037 / DSM 5601 / CCUG 37298 / CIP 103539 / LMG 7603 / PAl5</strain>
    </source>
</reference>
<reference key="2">
    <citation type="journal article" date="2010" name="Stand. Genomic Sci.">
        <title>Two genome sequences of the same bacterial strain, Gluconacetobacter diazotrophicus PAl 5, suggest a new standard in genome sequence submission.</title>
        <authorList>
            <person name="Giongo A."/>
            <person name="Tyler H.L."/>
            <person name="Zipperer U.N."/>
            <person name="Triplett E.W."/>
        </authorList>
    </citation>
    <scope>NUCLEOTIDE SEQUENCE [LARGE SCALE GENOMIC DNA]</scope>
    <source>
        <strain>ATCC 49037 / DSM 5601 / CCUG 37298 / CIP 103539 / LMG 7603 / PAl5</strain>
    </source>
</reference>
<proteinExistence type="inferred from homology"/>
<keyword id="KW-0285">Flavoprotein</keyword>
<keyword id="KW-0288">FMN</keyword>
<keyword id="KW-0520">NAD</keyword>
<keyword id="KW-0521">NADP</keyword>
<keyword id="KW-0547">Nucleotide-binding</keyword>
<keyword id="KW-0560">Oxidoreductase</keyword>
<keyword id="KW-1185">Reference proteome</keyword>
<organism>
    <name type="scientific">Gluconacetobacter diazotrophicus (strain ATCC 49037 / DSM 5601 / CCUG 37298 / CIP 103539 / LMG 7603 / PAl5)</name>
    <dbReference type="NCBI Taxonomy" id="272568"/>
    <lineage>
        <taxon>Bacteria</taxon>
        <taxon>Pseudomonadati</taxon>
        <taxon>Pseudomonadota</taxon>
        <taxon>Alphaproteobacteria</taxon>
        <taxon>Acetobacterales</taxon>
        <taxon>Acetobacteraceae</taxon>
        <taxon>Gluconacetobacter</taxon>
    </lineage>
</organism>